<organism>
    <name type="scientific">Mus musculus</name>
    <name type="common">Mouse</name>
    <dbReference type="NCBI Taxonomy" id="10090"/>
    <lineage>
        <taxon>Eukaryota</taxon>
        <taxon>Metazoa</taxon>
        <taxon>Chordata</taxon>
        <taxon>Craniata</taxon>
        <taxon>Vertebrata</taxon>
        <taxon>Euteleostomi</taxon>
        <taxon>Mammalia</taxon>
        <taxon>Eutheria</taxon>
        <taxon>Euarchontoglires</taxon>
        <taxon>Glires</taxon>
        <taxon>Rodentia</taxon>
        <taxon>Myomorpha</taxon>
        <taxon>Muroidea</taxon>
        <taxon>Muridae</taxon>
        <taxon>Murinae</taxon>
        <taxon>Mus</taxon>
        <taxon>Mus</taxon>
    </lineage>
</organism>
<protein>
    <recommendedName>
        <fullName>Potassium channel subfamily K member 18</fullName>
    </recommendedName>
    <alternativeName>
        <fullName evidence="16">Two-pore-domain potassium channel TRESK</fullName>
    </alternativeName>
</protein>
<keyword id="KW-1003">Cell membrane</keyword>
<keyword id="KW-1015">Disulfide bond</keyword>
<keyword id="KW-0325">Glycoprotein</keyword>
<keyword id="KW-0407">Ion channel</keyword>
<keyword id="KW-0406">Ion transport</keyword>
<keyword id="KW-0472">Membrane</keyword>
<keyword id="KW-0479">Metal-binding</keyword>
<keyword id="KW-0597">Phosphoprotein</keyword>
<keyword id="KW-0630">Potassium</keyword>
<keyword id="KW-0631">Potassium channel</keyword>
<keyword id="KW-0633">Potassium transport</keyword>
<keyword id="KW-1185">Reference proteome</keyword>
<keyword id="KW-0812">Transmembrane</keyword>
<keyword id="KW-1133">Transmembrane helix</keyword>
<keyword id="KW-0813">Transport</keyword>
<name>KCNKI_MOUSE</name>
<feature type="chain" id="PRO_0000312501" description="Potassium channel subfamily K member 18">
    <location>
        <begin position="1"/>
        <end position="394"/>
    </location>
</feature>
<feature type="topological domain" description="Cytoplasmic" evidence="3">
    <location>
        <begin position="1"/>
        <end position="31"/>
    </location>
</feature>
<feature type="transmembrane region" description="Helical" evidence="3">
    <location>
        <begin position="32"/>
        <end position="52"/>
    </location>
</feature>
<feature type="intramembrane region" description="Pore-forming; Name=Pore-forming 1" evidence="3">
    <location>
        <begin position="114"/>
        <end position="140"/>
    </location>
</feature>
<feature type="transmembrane region" description="Helical" evidence="3">
    <location>
        <begin position="142"/>
        <end position="162"/>
    </location>
</feature>
<feature type="topological domain" description="Cytoplasmic" evidence="3">
    <location>
        <begin position="163"/>
        <end position="292"/>
    </location>
</feature>
<feature type="transmembrane region" description="Helical" evidence="3">
    <location>
        <begin position="293"/>
        <end position="313"/>
    </location>
</feature>
<feature type="intramembrane region" description="Pore-forming; Name=Pore-forming 2" evidence="3">
    <location>
        <begin position="326"/>
        <end position="340"/>
    </location>
</feature>
<feature type="transmembrane region" description="Helical" evidence="3">
    <location>
        <begin position="347"/>
        <end position="367"/>
    </location>
</feature>
<feature type="topological domain" description="Cytoplasmic" evidence="3">
    <location>
        <begin position="368"/>
        <end position="394"/>
    </location>
</feature>
<feature type="region of interest" description="Selectivity filter 1" evidence="1">
    <location>
        <begin position="127"/>
        <end position="132"/>
    </location>
</feature>
<feature type="region of interest" description="Interaction with calcineurin" evidence="6">
    <location>
        <begin position="210"/>
        <end position="215"/>
    </location>
</feature>
<feature type="region of interest" description="Interaction with YWHAH" evidence="8">
    <location>
        <begin position="261"/>
        <end position="266"/>
    </location>
</feature>
<feature type="region of interest" description="Selectivity filter 2" evidence="2">
    <location>
        <begin position="335"/>
        <end position="340"/>
    </location>
</feature>
<feature type="binding site" evidence="1">
    <location>
        <position position="127"/>
    </location>
    <ligand>
        <name>K(+)</name>
        <dbReference type="ChEBI" id="CHEBI:29103"/>
        <label>1</label>
    </ligand>
</feature>
<feature type="binding site" evidence="1">
    <location>
        <position position="127"/>
    </location>
    <ligand>
        <name>K(+)</name>
        <dbReference type="ChEBI" id="CHEBI:29103"/>
        <label>4</label>
    </ligand>
</feature>
<feature type="binding site" evidence="1">
    <location>
        <position position="128"/>
    </location>
    <ligand>
        <name>K(+)</name>
        <dbReference type="ChEBI" id="CHEBI:29103"/>
        <label>1</label>
    </ligand>
</feature>
<feature type="binding site" evidence="1">
    <location>
        <position position="128"/>
    </location>
    <ligand>
        <name>K(+)</name>
        <dbReference type="ChEBI" id="CHEBI:29103"/>
        <label>2</label>
    </ligand>
</feature>
<feature type="binding site" evidence="1">
    <location>
        <position position="129"/>
    </location>
    <ligand>
        <name>K(+)</name>
        <dbReference type="ChEBI" id="CHEBI:29103"/>
        <label>2</label>
    </ligand>
</feature>
<feature type="binding site" evidence="1">
    <location>
        <position position="129"/>
    </location>
    <ligand>
        <name>K(+)</name>
        <dbReference type="ChEBI" id="CHEBI:29103"/>
        <label>3</label>
    </ligand>
</feature>
<feature type="binding site" evidence="1">
    <location>
        <position position="130"/>
    </location>
    <ligand>
        <name>K(+)</name>
        <dbReference type="ChEBI" id="CHEBI:29103"/>
        <label>3</label>
    </ligand>
</feature>
<feature type="modified residue" description="Phosphoserine" evidence="8">
    <location>
        <position position="264"/>
    </location>
</feature>
<feature type="modified residue" description="Phosphoserine" evidence="18">
    <location>
        <position position="276"/>
    </location>
</feature>
<feature type="glycosylation site" description="N-linked (GlcNAc...) asparagine" evidence="10">
    <location>
        <position position="83"/>
    </location>
</feature>
<feature type="disulfide bond" description="Interchain (with C-77)" evidence="1">
    <location>
        <position position="77"/>
    </location>
</feature>
<feature type="mutagenesis site" description="Strongly reduced current amplitude and localization to cell membrane." evidence="10">
    <original>N</original>
    <variation>Q</variation>
    <location>
        <position position="83"/>
    </location>
</feature>
<feature type="mutagenesis site" description="Acts as a dominant negative on wild-type KCNK18 or KCNK10 subunits." evidence="13">
    <original>G</original>
    <variation>E</variation>
    <location>
        <position position="131"/>
    </location>
</feature>
<feature type="mutagenesis site" description="Insensitive to extracellular protons." evidence="7">
    <original>H</original>
    <variation>N</variation>
    <location>
        <position position="132"/>
    </location>
</feature>
<feature type="mutagenesis site" description="Loss of interaction with calcineurin and activation by elevated intracellular calcium; when associated with A-214." evidence="6">
    <original>I</original>
    <variation>A</variation>
    <location>
        <position position="212"/>
    </location>
</feature>
<feature type="mutagenesis site" description="Strongly reduced activation by elevated intracellular Ca(2+). Loss of interaction with calcineurin and activation by elevated intracellular Ca(2+); when associated with A-212." evidence="6">
    <original>I</original>
    <variation>A</variation>
    <location>
        <position position="214"/>
    </location>
</feature>
<feature type="mutagenesis site" description="Loss of interaction with YWHAH. No effect on channel conductance." evidence="8 13">
    <original>S</original>
    <variation>A</variation>
    <location>
        <position position="264"/>
    </location>
</feature>
<feature type="mutagenesis site" description="Further decreases the open probability of the channel, without affecting the single channel conductance; when associated with E-276." evidence="13">
    <original>S</original>
    <variation>E</variation>
    <location>
        <position position="264"/>
    </location>
</feature>
<feature type="mutagenesis site" description="Increases the open probability of the channel, without affecting the single channel conductance. Confers resistance to stimulation by calcineurin. Mice carrying the mutant allele display increased Treg numbers in thymus and spleen." evidence="4 13 15">
    <original>S</original>
    <variation>A</variation>
    <location>
        <position position="276"/>
    </location>
</feature>
<feature type="mutagenesis site" description="Decreases the open probability of the channel, without affecting the single channel conductance." evidence="13">
    <original>S</original>
    <variation>E</variation>
    <location>
        <position position="276"/>
    </location>
</feature>
<feature type="mutagenesis site" description="Loss of channel conductance. In DRG sensory neurons, results in decreased rheobase current, decreased action potential duration and amplitude upon hyperpolarization and increased sensitivity to depolarizing stimuli, but has no effect on resting membrane potential. Mice carrying the mutant allele display impaired thymic Treg development and increased suceptibility to autoimmune encephalomyelitis." evidence="7 15">
    <original>G</original>
    <variation>R</variation>
    <location>
        <position position="339"/>
    </location>
</feature>
<feature type="sequence conflict" description="In Ref. 4; AAI15706/AAI04133." evidence="17" ref="4">
    <original>K</original>
    <variation>R</variation>
    <location>
        <position position="228"/>
    </location>
</feature>
<feature type="sequence conflict" description="In Ref. 4; AAI15706/AAI04133." evidence="17" ref="4">
    <original>K</original>
    <variation>E</variation>
    <location>
        <position position="251"/>
    </location>
</feature>
<accession>Q6VV64</accession>
<accession>Q1LZJ5</accession>
<accession>Q1LZM8</accession>
<accession>Q3MI50</accession>
<accession>Q3MI51</accession>
<sequence length="394" mass="44403">MEAEEPPEARRCCPEALGKARGCCPEALGKLLPGLCFLCCLVTYALVGAALFSAVEGRPDPEAEENPELKKFLDDLCNILKCNLTVVEGSRKNLCEHLQHLKPQWLKAPQDWSFLSALFFCCTVFSTVGYGHMYPVTRLGKFLCMLYALFGIPLMFLVLTDIGDILATILSRAYSRFQALLCLPHDIFKWRSLPLCRKQPDSKPVEEAIPQIVIDAGVDELLNPQPSKDPPSPSCNVELFERLVAREKKNKLQPPTRPVERSNSCPELVLGRLSCSILSNLDEVGQQVERLDIPLPVIALVVFAYISCAAAILPFWETELGFEDAFYFCFVTLTTIGFGDIVLVHPHFFLFFSIYIIVGMEILFIAFKLMQNRLLHTYKTLMLFVCQREVSLPW</sequence>
<proteinExistence type="evidence at protein level"/>
<reference key="1">
    <citation type="journal article" date="2004" name="J. Biol. Chem.">
        <title>The two-pore domain K+ channel, TRESK, is activated by the cytoplasmic calcium signal through calcineurin.</title>
        <authorList>
            <person name="Czirjak G."/>
            <person name="Toth Z.E."/>
            <person name="Enyedi P."/>
        </authorList>
    </citation>
    <scope>NUCLEOTIDE SEQUENCE [MRNA]</scope>
    <scope>FUNCTION</scope>
    <scope>TRANSPORTER ACTIVITY</scope>
    <scope>ACTIVITY REGULATION</scope>
    <scope>MUTAGENESIS OF SER-276</scope>
    <scope>PHOSPHORYLATION AT SER-276</scope>
    <scope>TISSUE SPECIFICITY</scope>
    <source>
        <strain>NMRI</strain>
        <tissue>Cerebellum</tissue>
    </source>
</reference>
<reference key="2">
    <citation type="journal article" date="2005" name="Anesth. Analg.">
        <title>Species-specific differences in response to anesthetics and other modulators by the K2P channel TRESK.</title>
        <authorList>
            <person name="Keshavaprasad B."/>
            <person name="Liu C."/>
            <person name="Au J.D."/>
            <person name="Kindler C.H."/>
            <person name="Cotten J.F."/>
            <person name="Yost C.S."/>
        </authorList>
    </citation>
    <scope>NUCLEOTIDE SEQUENCE [MRNA]</scope>
    <scope>TISSUE SPECIFICITY</scope>
    <scope>FUNCTION</scope>
    <scope>ACTIVITY REGULATION</scope>
    <source>
        <strain>BALB/cJ</strain>
        <tissue>Spinal cord</tissue>
    </source>
</reference>
<reference key="3">
    <citation type="journal article" date="2005" name="Science">
        <title>The transcriptional landscape of the mammalian genome.</title>
        <authorList>
            <person name="Carninci P."/>
            <person name="Kasukawa T."/>
            <person name="Katayama S."/>
            <person name="Gough J."/>
            <person name="Frith M.C."/>
            <person name="Maeda N."/>
            <person name="Oyama R."/>
            <person name="Ravasi T."/>
            <person name="Lenhard B."/>
            <person name="Wells C."/>
            <person name="Kodzius R."/>
            <person name="Shimokawa K."/>
            <person name="Bajic V.B."/>
            <person name="Brenner S.E."/>
            <person name="Batalov S."/>
            <person name="Forrest A.R."/>
            <person name="Zavolan M."/>
            <person name="Davis M.J."/>
            <person name="Wilming L.G."/>
            <person name="Aidinis V."/>
            <person name="Allen J.E."/>
            <person name="Ambesi-Impiombato A."/>
            <person name="Apweiler R."/>
            <person name="Aturaliya R.N."/>
            <person name="Bailey T.L."/>
            <person name="Bansal M."/>
            <person name="Baxter L."/>
            <person name="Beisel K.W."/>
            <person name="Bersano T."/>
            <person name="Bono H."/>
            <person name="Chalk A.M."/>
            <person name="Chiu K.P."/>
            <person name="Choudhary V."/>
            <person name="Christoffels A."/>
            <person name="Clutterbuck D.R."/>
            <person name="Crowe M.L."/>
            <person name="Dalla E."/>
            <person name="Dalrymple B.P."/>
            <person name="de Bono B."/>
            <person name="Della Gatta G."/>
            <person name="di Bernardo D."/>
            <person name="Down T."/>
            <person name="Engstrom P."/>
            <person name="Fagiolini M."/>
            <person name="Faulkner G."/>
            <person name="Fletcher C.F."/>
            <person name="Fukushima T."/>
            <person name="Furuno M."/>
            <person name="Futaki S."/>
            <person name="Gariboldi M."/>
            <person name="Georgii-Hemming P."/>
            <person name="Gingeras T.R."/>
            <person name="Gojobori T."/>
            <person name="Green R.E."/>
            <person name="Gustincich S."/>
            <person name="Harbers M."/>
            <person name="Hayashi Y."/>
            <person name="Hensch T.K."/>
            <person name="Hirokawa N."/>
            <person name="Hill D."/>
            <person name="Huminiecki L."/>
            <person name="Iacono M."/>
            <person name="Ikeo K."/>
            <person name="Iwama A."/>
            <person name="Ishikawa T."/>
            <person name="Jakt M."/>
            <person name="Kanapin A."/>
            <person name="Katoh M."/>
            <person name="Kawasawa Y."/>
            <person name="Kelso J."/>
            <person name="Kitamura H."/>
            <person name="Kitano H."/>
            <person name="Kollias G."/>
            <person name="Krishnan S.P."/>
            <person name="Kruger A."/>
            <person name="Kummerfeld S.K."/>
            <person name="Kurochkin I.V."/>
            <person name="Lareau L.F."/>
            <person name="Lazarevic D."/>
            <person name="Lipovich L."/>
            <person name="Liu J."/>
            <person name="Liuni S."/>
            <person name="McWilliam S."/>
            <person name="Madan Babu M."/>
            <person name="Madera M."/>
            <person name="Marchionni L."/>
            <person name="Matsuda H."/>
            <person name="Matsuzawa S."/>
            <person name="Miki H."/>
            <person name="Mignone F."/>
            <person name="Miyake S."/>
            <person name="Morris K."/>
            <person name="Mottagui-Tabar S."/>
            <person name="Mulder N."/>
            <person name="Nakano N."/>
            <person name="Nakauchi H."/>
            <person name="Ng P."/>
            <person name="Nilsson R."/>
            <person name="Nishiguchi S."/>
            <person name="Nishikawa S."/>
            <person name="Nori F."/>
            <person name="Ohara O."/>
            <person name="Okazaki Y."/>
            <person name="Orlando V."/>
            <person name="Pang K.C."/>
            <person name="Pavan W.J."/>
            <person name="Pavesi G."/>
            <person name="Pesole G."/>
            <person name="Petrovsky N."/>
            <person name="Piazza S."/>
            <person name="Reed J."/>
            <person name="Reid J.F."/>
            <person name="Ring B.Z."/>
            <person name="Ringwald M."/>
            <person name="Rost B."/>
            <person name="Ruan Y."/>
            <person name="Salzberg S.L."/>
            <person name="Sandelin A."/>
            <person name="Schneider C."/>
            <person name="Schoenbach C."/>
            <person name="Sekiguchi K."/>
            <person name="Semple C.A."/>
            <person name="Seno S."/>
            <person name="Sessa L."/>
            <person name="Sheng Y."/>
            <person name="Shibata Y."/>
            <person name="Shimada H."/>
            <person name="Shimada K."/>
            <person name="Silva D."/>
            <person name="Sinclair B."/>
            <person name="Sperling S."/>
            <person name="Stupka E."/>
            <person name="Sugiura K."/>
            <person name="Sultana R."/>
            <person name="Takenaka Y."/>
            <person name="Taki K."/>
            <person name="Tammoja K."/>
            <person name="Tan S.L."/>
            <person name="Tang S."/>
            <person name="Taylor M.S."/>
            <person name="Tegner J."/>
            <person name="Teichmann S.A."/>
            <person name="Ueda H.R."/>
            <person name="van Nimwegen E."/>
            <person name="Verardo R."/>
            <person name="Wei C.L."/>
            <person name="Yagi K."/>
            <person name="Yamanishi H."/>
            <person name="Zabarovsky E."/>
            <person name="Zhu S."/>
            <person name="Zimmer A."/>
            <person name="Hide W."/>
            <person name="Bult C."/>
            <person name="Grimmond S.M."/>
            <person name="Teasdale R.D."/>
            <person name="Liu E.T."/>
            <person name="Brusic V."/>
            <person name="Quackenbush J."/>
            <person name="Wahlestedt C."/>
            <person name="Mattick J.S."/>
            <person name="Hume D.A."/>
            <person name="Kai C."/>
            <person name="Sasaki D."/>
            <person name="Tomaru Y."/>
            <person name="Fukuda S."/>
            <person name="Kanamori-Katayama M."/>
            <person name="Suzuki M."/>
            <person name="Aoki J."/>
            <person name="Arakawa T."/>
            <person name="Iida J."/>
            <person name="Imamura K."/>
            <person name="Itoh M."/>
            <person name="Kato T."/>
            <person name="Kawaji H."/>
            <person name="Kawagashira N."/>
            <person name="Kawashima T."/>
            <person name="Kojima M."/>
            <person name="Kondo S."/>
            <person name="Konno H."/>
            <person name="Nakano K."/>
            <person name="Ninomiya N."/>
            <person name="Nishio T."/>
            <person name="Okada M."/>
            <person name="Plessy C."/>
            <person name="Shibata K."/>
            <person name="Shiraki T."/>
            <person name="Suzuki S."/>
            <person name="Tagami M."/>
            <person name="Waki K."/>
            <person name="Watahiki A."/>
            <person name="Okamura-Oho Y."/>
            <person name="Suzuki H."/>
            <person name="Kawai J."/>
            <person name="Hayashizaki Y."/>
        </authorList>
    </citation>
    <scope>NUCLEOTIDE SEQUENCE [LARGE SCALE MRNA]</scope>
    <source>
        <strain>C57BL/6J</strain>
        <tissue>Egg</tissue>
    </source>
</reference>
<reference key="4">
    <citation type="journal article" date="2004" name="Genome Res.">
        <title>The status, quality, and expansion of the NIH full-length cDNA project: the Mammalian Gene Collection (MGC).</title>
        <authorList>
            <consortium name="The MGC Project Team"/>
        </authorList>
    </citation>
    <scope>NUCLEOTIDE SEQUENCE [LARGE SCALE MRNA]</scope>
</reference>
<reference key="5">
    <citation type="journal article" date="2006" name="J. Biol. Chem.">
        <title>Targeting of calcineurin to an NFAT-like docking site is required for the calcium-dependent activation of the background K+ channel, TRESK.</title>
        <authorList>
            <person name="Czirjak G."/>
            <person name="Enyedi P."/>
        </authorList>
    </citation>
    <scope>FUNCTION</scope>
    <scope>TRANSPORTER ACTIVITY</scope>
    <scope>INTERACTION WITH CALCINEURIN</scope>
    <scope>REGION</scope>
    <scope>MUTAGENESIS OF ILE-212 AND ILE-214</scope>
</reference>
<reference key="6">
    <citation type="journal article" date="2007" name="J. Physiol. (Lond.)">
        <title>TRESK two-pore-domain K+ channels constitute a significant component of background potassium currents in murine dorsal root ganglion neurones.</title>
        <authorList>
            <person name="Dobler T."/>
            <person name="Springauf A."/>
            <person name="Tovornik S."/>
            <person name="Weber M."/>
            <person name="Schmitt A."/>
            <person name="Sedlmeier R."/>
            <person name="Wischmeyer E."/>
            <person name="Doring F."/>
        </authorList>
    </citation>
    <scope>FUNCTION</scope>
    <scope>TISSUE SPECIFICITY</scope>
    <scope>MUTAGENESIS OF HIS-132 AND GLY-339</scope>
</reference>
<reference key="7">
    <citation type="journal article" date="2008" name="J. Biol. Chem.">
        <title>Phosphorylation-dependent binding of 14-3-3 proteins controls TRESK regulation.</title>
        <authorList>
            <person name="Czirjak G."/>
            <person name="Vuity D."/>
            <person name="Enyedi P."/>
        </authorList>
    </citation>
    <scope>INTERACTION WITH YWHAH</scope>
    <scope>MUTAGENESIS OF SER-264</scope>
    <scope>PHOSPHORYLATION AT SER-264</scope>
</reference>
<reference key="8">
    <citation type="journal article" date="2008" name="Nat. Neurosci.">
        <title>Pungent agents from Szechuan peppers excite sensory neurons by inhibiting two-pore potassium channels.</title>
        <authorList>
            <person name="Bautista D.M."/>
            <person name="Sigal Y.M."/>
            <person name="Milstein A.D."/>
            <person name="Garrison J.L."/>
            <person name="Zorn J.A."/>
            <person name="Tsuruda P.R."/>
            <person name="Nicoll R.A."/>
            <person name="Julius D."/>
        </authorList>
    </citation>
    <scope>FUNCTION</scope>
    <scope>TRANSPORTER ACTIVITY</scope>
    <scope>ACTIVITY REGULATION</scope>
</reference>
<reference key="9">
    <citation type="journal article" date="2010" name="Biochem. Biophys. Res. Commun.">
        <title>N-linked glycosylation determines cell surface expression of two-pore-domain K+ channel TRESK.</title>
        <authorList>
            <person name="Egenberger B."/>
            <person name="Polleichtner G."/>
            <person name="Wischmeyer E."/>
            <person name="Doring F."/>
        </authorList>
    </citation>
    <scope>SUBCELLULAR LOCATION</scope>
    <scope>GLYCOSYLATION AT ASN-83</scope>
    <scope>MUTAGENESIS OF ASN-83</scope>
</reference>
<reference key="10">
    <citation type="journal article" date="2010" name="Nat. Med.">
        <title>A dominant-negative mutation in the TRESK potassium channel is linked to familial migraine with aura.</title>
        <authorList>
            <person name="Lafreniere R.G."/>
            <person name="Cader M.Z."/>
            <person name="Poulin J.F."/>
            <person name="Andres-Enguix I."/>
            <person name="Simoneau M."/>
            <person name="Gupta N."/>
            <person name="Boisvert K."/>
            <person name="Lafreniere F."/>
            <person name="McLaughlan S."/>
            <person name="Dube M.P."/>
            <person name="Marcinkiewicz M.M."/>
            <person name="Ramagopalan S."/>
            <person name="Ansorge O."/>
            <person name="Brais B."/>
            <person name="Sequeiros J."/>
            <person name="Pereira-Monteiro J.M."/>
            <person name="Griffiths L.R."/>
            <person name="Tucker S.J."/>
            <person name="Ebers G."/>
            <person name="Rouleau G.A."/>
        </authorList>
    </citation>
    <scope>TISSUE SPECIFICITY</scope>
    <scope>DEVELOPMENTAL STAGE</scope>
</reference>
<reference key="11">
    <citation type="journal article" date="2019" name="Neuron">
        <title>Migraine-Associated TRESK Mutations Increase Neuronal Excitability through Alternative Translation Initiation and Inhibition of TREK.</title>
        <authorList>
            <person name="Royal P."/>
            <person name="Andres-Bilbe A."/>
            <person name="Avalos Prado P."/>
            <person name="Verkest C."/>
            <person name="Wdziekonski B."/>
            <person name="Schaub S."/>
            <person name="Baron A."/>
            <person name="Lesage F."/>
            <person name="Gasull X."/>
            <person name="Levitz J."/>
            <person name="Sandoz G."/>
        </authorList>
    </citation>
    <scope>FUNCTION</scope>
    <scope>SUBUNIT</scope>
    <scope>INTERACTION WITH KCNK2 AND KCNK10</scope>
    <scope>TISSUE SPECIFICITY</scope>
    <scope>DISEASE</scope>
</reference>
<reference key="12">
    <citation type="journal article" date="2020" name="J. Biol. Chem.">
        <title>TRESK and TREK-2 two-pore-domain potassium channel subunits form functional heterodimers in primary somatosensory neurons.</title>
        <authorList>
            <person name="Lengyel M."/>
            <person name="Czirjak G."/>
            <person name="Jacobson D.A."/>
            <person name="Enyedi P."/>
        </authorList>
    </citation>
    <scope>FUNCTION</scope>
    <scope>TRANSPORTER ACTIVITY</scope>
    <scope>MUTAGENESIS OF GLY-131; SER-264 AND SER-276</scope>
</reference>
<reference key="13">
    <citation type="journal article" date="2021" name="IScience">
        <title>TREK channel activation suppresses migraine pain phenotype.</title>
        <authorList>
            <person name="Avalos Prado P."/>
            <person name="Landra-Willm A."/>
            <person name="Verkest C."/>
            <person name="Ribera A."/>
            <person name="Chassot A.A."/>
            <person name="Baron A."/>
            <person name="Sandoz G."/>
        </authorList>
    </citation>
    <scope>FUNCTION</scope>
</reference>
<reference key="14">
    <citation type="journal article" date="2022" name="Cell Res.">
        <title>K2P18.1 translates T cell receptor signals into thymic regulatory T cell development.</title>
        <authorList>
            <person name="Ruck T."/>
            <person name="Bock S."/>
            <person name="Pfeuffer S."/>
            <person name="Schroeter C.B."/>
            <person name="Cengiz D."/>
            <person name="Marciniak P."/>
            <person name="Lindner M."/>
            <person name="Herrmann A."/>
            <person name="Liebmann M."/>
            <person name="Kovac S."/>
            <person name="Gola L."/>
            <person name="Rolfes L."/>
            <person name="Pawlitzki M."/>
            <person name="Opel N."/>
            <person name="Hahn T."/>
            <person name="Dannlowski U."/>
            <person name="Pap T."/>
            <person name="Luessi F."/>
            <person name="Schreiber J.A."/>
            <person name="Wuensch B."/>
            <person name="Kuhlmann T."/>
            <person name="Seebohm G."/>
            <person name="Tackenberg B."/>
            <person name="Seja P."/>
            <person name="Doering F."/>
            <person name="Wischmeyer E."/>
            <person name="Chasan A.I."/>
            <person name="Roth J."/>
            <person name="Klotz L."/>
            <person name="Meyer Zu Hoerste G."/>
            <person name="Wiendl H."/>
            <person name="Marschall T."/>
            <person name="Floess S."/>
            <person name="Huehn J."/>
            <person name="Budde T."/>
            <person name="Bopp T."/>
            <person name="Bittner S."/>
            <person name="Meuth S.G."/>
        </authorList>
    </citation>
    <scope>FUNCTION</scope>
    <scope>INDUCTION</scope>
    <scope>TISSUE SPECIFICITY</scope>
    <scope>DISRUPTION PHENOTYPE</scope>
    <scope>MUTAGENESIS OF SER-276 AND GLY-339</scope>
</reference>
<gene>
    <name evidence="19" type="primary">Kcnk18</name>
    <name type="synonym">Tresk-2</name>
    <name type="synonym">Tresk2</name>
</gene>
<comment type="function">
    <text evidence="4 5 6 7 9 12 13 14 15">K(+) channel that conducts outward and inward rectifying currents at depolarized and hyperpolarized membrane potentials, respectively. The outward rectifying currents are voltage-dependent, coupled to K(+) electrochemical gradient across the membrane, whereas the inward currents can be induced in response to activation of Ca(2+)-mobilizing receptors (PubMed:14981085, PubMed:16192517, PubMed:16569637, PubMed:17962323). Homo- and heterodimerizes to form functional channels with distinct regulatory and gating properties. In trigeminal ganglia sensory neurons, the heterodimers of KCNK18/TRESK and KCNK2/TREK-1 or KCNK10/TREK-2 inhibit neuronal firing and neurogenic inflammation by stabilizing the resting membrane potential at K(+) equilibrium potential as well as by regulating the threshold of action potentials and the spike frequency (PubMed:17962323, PubMed:30573346, PubMed:32641496, PubMed:34458705). In thymocytes, conducts K(+) currents upon T cell receptor (TCR) signaling leading to sustained Ca(2+) influx and NF-kappa-B activation, FOXP3 transcription and positive selection of regulatory T cell (Treg) progenitor subsets (PubMed:34702947). Appears to mediate the analgesics effects of hydroxy-alpha-sanshool, a metabolite naturally present in Schezuan pepper and other Xanthoxylum plants (PubMed:18568022).</text>
</comment>
<comment type="catalytic activity">
    <reaction evidence="4 6 9 13">
        <text>K(+)(in) = K(+)(out)</text>
        <dbReference type="Rhea" id="RHEA:29463"/>
        <dbReference type="ChEBI" id="CHEBI:29103"/>
    </reaction>
</comment>
<comment type="activity regulation">
    <text evidence="4 5 9">Activated upon cell stimulation via Ca(2+)-mobilizing receptors, such as CHRM1/M1 muscarinic receptor and AGTR1/AT1a angiotensin receptor (PubMed:14981085). Activated by volatile anesthetics, such as isoflurane and inhibited by local anesthetics such as bupivacaine and lidocaine. Inhibited by extracellular acidic pH (PubMed:16192517, PubMed:18568022). Inhibited by Zn(2+) ions (PubMed:16192517). Inhibited by hydroxy-alpha-sanshool, an ingredient of Schezuan pepper. Inhibited by Ba(2+) ions (PubMed:18568022).</text>
</comment>
<comment type="subunit">
    <text evidence="6 8 12">Homodimer. Heterodimer with KCNK2. Heterodimer with KCNK10 (PubMed:30573346). Interacts with calcineurin. Interacts with YWHAH, in a phosphorylation-dependent manner.</text>
</comment>
<comment type="subcellular location">
    <subcellularLocation>
        <location evidence="10">Cell membrane</location>
        <topology evidence="10">Multi-pass membrane protein</topology>
    </subcellularLocation>
</comment>
<comment type="tissue specificity">
    <text evidence="4 5 7 11 12 15">Detected in brain cortex, cerebellum, dorsal root ganglion, spinal cord and testis. High expression in trigeminal ganglion (at protein level), also expressed in autonomic nervous system ganglia such as the stellate ganglion and paravertebral sympathetic ganglia. Expressed in all adult spinal cord and brain regions, with slightly higher expression in thalamus, hypothalamus, hippocampus and posterior corte (at protein level). In non-neuronal tissues, substantial expression found in lung and heart and weal expression in liver, testis, kidney, small intestine and spleen. Expressed in regulatory T cells (at protein level).</text>
</comment>
<comment type="developmental stage">
    <text evidence="11">Expression appears in trigeminal ganglion and dorsal root ganglia from 15.5 dpc and increased through 18 dpc to reach a peak in newborn mouse postnatal day 1.</text>
</comment>
<comment type="induction">
    <text evidence="15">Up-regulated in Tregs upon TCR stimulation.</text>
</comment>
<comment type="domain">
    <text evidence="2">Each subunit contributes two pore-forming domains 1 and 2 which assemble to form a single pore with M2 and M4 transmembrane helices lining the central cavity and M1 and M3 facing the lipid bilayer. The transmembrane helices are bridged by the selectivity filters 1 and 2 carrying a signature sequence TxTTxGYGD that coordinate the permeant ions. Up to four ions can simultaneously occupy the selectivity filter and at least two elementary charges must translocate across the filter to convert it into the open conformation.</text>
</comment>
<comment type="PTM">
    <text evidence="4 8">Phosphorylation of Ser-264 is required for the binding of 14-3-3eta/YWHAH. Calcineurin-mediated dephosphorylation of Ser-276 enhances channel activity.</text>
</comment>
<comment type="PTM">
    <text evidence="10">N-glycosylated.</text>
</comment>
<comment type="disease">
    <text evidence="12">Frameshift variants combined with alternative initiation of translation result in the production of aberrant truncated KCNK18/TRESK proteins with dominant negative effects on KCNK2/TREK-1 and KCNK10/TREK-2 channel subunits, causing trigeminal neuron hyperexcitability and migraine-like phenotype, similarly to TREK-1 and TREK-2 double knockout mice.</text>
</comment>
<comment type="disruption phenotype">
    <text evidence="15">Splenomegaly due to increased lymphocyte proliferation.</text>
</comment>
<comment type="miscellaneous">
    <text>Regulated by extracellular protons whereas human ortholog is not. His-132 is responsible for proton-dependent specific activity.</text>
</comment>
<comment type="similarity">
    <text evidence="17">Belongs to the two pore domain potassium channel (TC 1.A.1.8) family.</text>
</comment>
<comment type="online information" name="Protein Spotlight">
    <link uri="https://www.proteinspotlight.org/back_issues/124"/>
    <text>Throb - Issue 124 of December 2010</text>
</comment>
<dbReference type="EMBL" id="AY325301">
    <property type="protein sequence ID" value="AAQ91836.1"/>
    <property type="molecule type" value="mRNA"/>
</dbReference>
<dbReference type="EMBL" id="AY542902">
    <property type="protein sequence ID" value="AAS48426.1"/>
    <property type="molecule type" value="mRNA"/>
</dbReference>
<dbReference type="EMBL" id="AK139600">
    <property type="protein sequence ID" value="BAE24080.1"/>
    <property type="molecule type" value="mRNA"/>
</dbReference>
<dbReference type="EMBL" id="AK162136">
    <property type="protein sequence ID" value="BAE36746.1"/>
    <property type="molecule type" value="mRNA"/>
</dbReference>
<dbReference type="EMBL" id="BC104132">
    <property type="protein sequence ID" value="AAI04133.1"/>
    <property type="molecule type" value="mRNA"/>
</dbReference>
<dbReference type="EMBL" id="BC104133">
    <property type="protein sequence ID" value="AAI04134.1"/>
    <property type="molecule type" value="mRNA"/>
</dbReference>
<dbReference type="EMBL" id="BC115705">
    <property type="protein sequence ID" value="AAI15706.1"/>
    <property type="molecule type" value="mRNA"/>
</dbReference>
<dbReference type="EMBL" id="BC115887">
    <property type="protein sequence ID" value="AAI15888.1"/>
    <property type="molecule type" value="mRNA"/>
</dbReference>
<dbReference type="EMBL" id="BC127136">
    <property type="protein sequence ID" value="AAI27137.1"/>
    <property type="molecule type" value="mRNA"/>
</dbReference>
<dbReference type="EMBL" id="BC127137">
    <property type="protein sequence ID" value="AAI27138.1"/>
    <property type="molecule type" value="mRNA"/>
</dbReference>
<dbReference type="CCDS" id="CCDS29934.1"/>
<dbReference type="RefSeq" id="NP_997144.1">
    <property type="nucleotide sequence ID" value="NM_207261.3"/>
</dbReference>
<dbReference type="CORUM" id="Q6VV64"/>
<dbReference type="ELM" id="Q6VV64"/>
<dbReference type="FunCoup" id="Q6VV64">
    <property type="interactions" value="413"/>
</dbReference>
<dbReference type="IntAct" id="Q6VV64">
    <property type="interactions" value="1"/>
</dbReference>
<dbReference type="MINT" id="Q6VV64"/>
<dbReference type="STRING" id="10090.ENSMUSP00000065713"/>
<dbReference type="ChEMBL" id="CHEMBL5169168"/>
<dbReference type="TCDB" id="1.A.1.18.1">
    <property type="family name" value="the voltage-gated ion channel (vic) superfamily"/>
</dbReference>
<dbReference type="GlyCosmos" id="Q6VV64">
    <property type="glycosylation" value="1 site, No reported glycans"/>
</dbReference>
<dbReference type="GlyGen" id="Q6VV64">
    <property type="glycosylation" value="1 site"/>
</dbReference>
<dbReference type="iPTMnet" id="Q6VV64"/>
<dbReference type="PhosphoSitePlus" id="Q6VV64"/>
<dbReference type="PaxDb" id="10090-ENSMUSP00000065713"/>
<dbReference type="ABCD" id="Q6VV64">
    <property type="antibodies" value="1 sequenced antibody"/>
</dbReference>
<dbReference type="Antibodypedia" id="46272">
    <property type="antibodies" value="111 antibodies from 29 providers"/>
</dbReference>
<dbReference type="DNASU" id="332396"/>
<dbReference type="Ensembl" id="ENSMUST00000065204.8">
    <property type="protein sequence ID" value="ENSMUSP00000065713.7"/>
    <property type="gene ID" value="ENSMUSG00000040901.9"/>
</dbReference>
<dbReference type="GeneID" id="332396"/>
<dbReference type="KEGG" id="mmu:332396"/>
<dbReference type="UCSC" id="uc008ibh.1">
    <property type="organism name" value="mouse"/>
</dbReference>
<dbReference type="AGR" id="MGI:2685627"/>
<dbReference type="CTD" id="338567"/>
<dbReference type="MGI" id="MGI:2685627">
    <property type="gene designation" value="Kcnk18"/>
</dbReference>
<dbReference type="VEuPathDB" id="HostDB:ENSMUSG00000040901"/>
<dbReference type="eggNOG" id="KOG1418">
    <property type="taxonomic scope" value="Eukaryota"/>
</dbReference>
<dbReference type="GeneTree" id="ENSGT00700000104522"/>
<dbReference type="HOGENOM" id="CLU_022504_5_3_1"/>
<dbReference type="InParanoid" id="Q6VV64"/>
<dbReference type="OMA" id="FWAVFPH"/>
<dbReference type="OrthoDB" id="297496at2759"/>
<dbReference type="PhylomeDB" id="Q6VV64"/>
<dbReference type="TreeFam" id="TF316115"/>
<dbReference type="Reactome" id="R-MMU-1299344">
    <property type="pathway name" value="TWIK-related spinal cord K+ channel (TRESK)"/>
</dbReference>
<dbReference type="Reactome" id="R-MMU-5576886">
    <property type="pathway name" value="Phase 4 - resting membrane potential"/>
</dbReference>
<dbReference type="BioGRID-ORCS" id="332396">
    <property type="hits" value="2 hits in 75 CRISPR screens"/>
</dbReference>
<dbReference type="PRO" id="PR:Q6VV64"/>
<dbReference type="Proteomes" id="UP000000589">
    <property type="component" value="Chromosome 19"/>
</dbReference>
<dbReference type="RNAct" id="Q6VV64">
    <property type="molecule type" value="protein"/>
</dbReference>
<dbReference type="Bgee" id="ENSMUSG00000040901">
    <property type="expression patterns" value="Expressed in animal zygote and 4 other cell types or tissues"/>
</dbReference>
<dbReference type="GO" id="GO:0005886">
    <property type="term" value="C:plasma membrane"/>
    <property type="evidence" value="ECO:0000314"/>
    <property type="project" value="UniProtKB"/>
</dbReference>
<dbReference type="GO" id="GO:0015269">
    <property type="term" value="F:calcium-activated potassium channel activity"/>
    <property type="evidence" value="ECO:0000314"/>
    <property type="project" value="UniProtKB"/>
</dbReference>
<dbReference type="GO" id="GO:0046872">
    <property type="term" value="F:metal ion binding"/>
    <property type="evidence" value="ECO:0007669"/>
    <property type="project" value="UniProtKB-KW"/>
</dbReference>
<dbReference type="GO" id="GO:0015271">
    <property type="term" value="F:outward rectifier potassium channel activity"/>
    <property type="evidence" value="ECO:0007669"/>
    <property type="project" value="Ensembl"/>
</dbReference>
<dbReference type="GO" id="GO:0071467">
    <property type="term" value="P:cellular response to pH"/>
    <property type="evidence" value="ECO:0007669"/>
    <property type="project" value="Ensembl"/>
</dbReference>
<dbReference type="GO" id="GO:0097623">
    <property type="term" value="P:potassium ion export across plasma membrane"/>
    <property type="evidence" value="ECO:0007669"/>
    <property type="project" value="Ensembl"/>
</dbReference>
<dbReference type="GO" id="GO:0006813">
    <property type="term" value="P:potassium ion transport"/>
    <property type="evidence" value="ECO:0000314"/>
    <property type="project" value="UniProtKB"/>
</dbReference>
<dbReference type="GO" id="GO:0032829">
    <property type="term" value="P:regulation of CD4-positive, CD25-positive, alpha-beta regulatory T cell differentiation"/>
    <property type="evidence" value="ECO:0000315"/>
    <property type="project" value="UniProtKB"/>
</dbReference>
<dbReference type="Gene3D" id="1.10.287.70">
    <property type="match status" value="1"/>
</dbReference>
<dbReference type="InterPro" id="IPR003280">
    <property type="entry name" value="2pore_dom_K_chnl"/>
</dbReference>
<dbReference type="InterPro" id="IPR003092">
    <property type="entry name" value="2pore_dom_K_chnl_TASK"/>
</dbReference>
<dbReference type="InterPro" id="IPR013099">
    <property type="entry name" value="K_chnl_dom"/>
</dbReference>
<dbReference type="PANTHER" id="PTHR11003:SF346">
    <property type="entry name" value="POTASSIUM CHANNEL SUBFAMILY K MEMBER 18"/>
    <property type="match status" value="1"/>
</dbReference>
<dbReference type="PANTHER" id="PTHR11003">
    <property type="entry name" value="POTASSIUM CHANNEL, SUBFAMILY K"/>
    <property type="match status" value="1"/>
</dbReference>
<dbReference type="Pfam" id="PF07885">
    <property type="entry name" value="Ion_trans_2"/>
    <property type="match status" value="2"/>
</dbReference>
<dbReference type="PRINTS" id="PR01333">
    <property type="entry name" value="2POREKCHANEL"/>
</dbReference>
<dbReference type="PRINTS" id="PR01095">
    <property type="entry name" value="TASKCHANNEL"/>
</dbReference>
<dbReference type="SUPFAM" id="SSF81324">
    <property type="entry name" value="Voltage-gated potassium channels"/>
    <property type="match status" value="2"/>
</dbReference>
<evidence type="ECO:0000250" key="1">
    <source>
        <dbReference type="UniProtKB" id="P57789"/>
    </source>
</evidence>
<evidence type="ECO:0000250" key="2">
    <source>
        <dbReference type="UniProtKB" id="Q7Z418"/>
    </source>
</evidence>
<evidence type="ECO:0000255" key="3"/>
<evidence type="ECO:0000269" key="4">
    <source>
    </source>
</evidence>
<evidence type="ECO:0000269" key="5">
    <source>
    </source>
</evidence>
<evidence type="ECO:0000269" key="6">
    <source>
    </source>
</evidence>
<evidence type="ECO:0000269" key="7">
    <source>
    </source>
</evidence>
<evidence type="ECO:0000269" key="8">
    <source>
    </source>
</evidence>
<evidence type="ECO:0000269" key="9">
    <source>
    </source>
</evidence>
<evidence type="ECO:0000269" key="10">
    <source>
    </source>
</evidence>
<evidence type="ECO:0000269" key="11">
    <source>
    </source>
</evidence>
<evidence type="ECO:0000269" key="12">
    <source>
    </source>
</evidence>
<evidence type="ECO:0000269" key="13">
    <source>
    </source>
</evidence>
<evidence type="ECO:0000269" key="14">
    <source>
    </source>
</evidence>
<evidence type="ECO:0000269" key="15">
    <source>
    </source>
</evidence>
<evidence type="ECO:0000303" key="16">
    <source>
    </source>
</evidence>
<evidence type="ECO:0000305" key="17"/>
<evidence type="ECO:0000305" key="18">
    <source>
    </source>
</evidence>
<evidence type="ECO:0000312" key="19">
    <source>
        <dbReference type="MGI" id="MGI:2685627"/>
    </source>
</evidence>